<dbReference type="EC" id="1.6.5.-" evidence="1"/>
<dbReference type="EC" id="1.7.1.17" evidence="1"/>
<dbReference type="EMBL" id="BA000004">
    <property type="protein sequence ID" value="BAB07579.1"/>
    <property type="molecule type" value="Genomic_DNA"/>
</dbReference>
<dbReference type="PIR" id="D84132">
    <property type="entry name" value="D84132"/>
</dbReference>
<dbReference type="RefSeq" id="WP_010899985.1">
    <property type="nucleotide sequence ID" value="NC_002570.2"/>
</dbReference>
<dbReference type="SMR" id="Q9K672"/>
<dbReference type="GeneID" id="87599405"/>
<dbReference type="KEGG" id="bha:BH3860"/>
<dbReference type="eggNOG" id="COG1182">
    <property type="taxonomic scope" value="Bacteria"/>
</dbReference>
<dbReference type="HOGENOM" id="CLU_088964_3_1_9"/>
<dbReference type="OrthoDB" id="9805013at2"/>
<dbReference type="Proteomes" id="UP000001258">
    <property type="component" value="Chromosome"/>
</dbReference>
<dbReference type="GO" id="GO:0009055">
    <property type="term" value="F:electron transfer activity"/>
    <property type="evidence" value="ECO:0007669"/>
    <property type="project" value="UniProtKB-UniRule"/>
</dbReference>
<dbReference type="GO" id="GO:0010181">
    <property type="term" value="F:FMN binding"/>
    <property type="evidence" value="ECO:0007669"/>
    <property type="project" value="UniProtKB-UniRule"/>
</dbReference>
<dbReference type="GO" id="GO:0016652">
    <property type="term" value="F:oxidoreductase activity, acting on NAD(P)H as acceptor"/>
    <property type="evidence" value="ECO:0007669"/>
    <property type="project" value="UniProtKB-UniRule"/>
</dbReference>
<dbReference type="GO" id="GO:0016655">
    <property type="term" value="F:oxidoreductase activity, acting on NAD(P)H, quinone or similar compound as acceptor"/>
    <property type="evidence" value="ECO:0007669"/>
    <property type="project" value="InterPro"/>
</dbReference>
<dbReference type="Gene3D" id="3.40.50.360">
    <property type="match status" value="1"/>
</dbReference>
<dbReference type="HAMAP" id="MF_01216">
    <property type="entry name" value="Azoreductase_type1"/>
    <property type="match status" value="1"/>
</dbReference>
<dbReference type="InterPro" id="IPR003680">
    <property type="entry name" value="Flavodoxin_fold"/>
</dbReference>
<dbReference type="InterPro" id="IPR029039">
    <property type="entry name" value="Flavoprotein-like_sf"/>
</dbReference>
<dbReference type="InterPro" id="IPR050104">
    <property type="entry name" value="FMN-dep_NADH:Q_OxRdtase_AzoR1"/>
</dbReference>
<dbReference type="InterPro" id="IPR023048">
    <property type="entry name" value="NADH:quinone_OxRdtase_FMN_depd"/>
</dbReference>
<dbReference type="NCBIfam" id="NF010075">
    <property type="entry name" value="PRK13556.1"/>
    <property type="match status" value="1"/>
</dbReference>
<dbReference type="PANTHER" id="PTHR43741">
    <property type="entry name" value="FMN-DEPENDENT NADH-AZOREDUCTASE 1"/>
    <property type="match status" value="1"/>
</dbReference>
<dbReference type="PANTHER" id="PTHR43741:SF4">
    <property type="entry name" value="FMN-DEPENDENT NADH:QUINONE OXIDOREDUCTASE"/>
    <property type="match status" value="1"/>
</dbReference>
<dbReference type="Pfam" id="PF02525">
    <property type="entry name" value="Flavodoxin_2"/>
    <property type="match status" value="1"/>
</dbReference>
<dbReference type="SUPFAM" id="SSF52218">
    <property type="entry name" value="Flavoproteins"/>
    <property type="match status" value="1"/>
</dbReference>
<protein>
    <recommendedName>
        <fullName evidence="1">FMN-dependent NADH:quinone oxidoreductase 2</fullName>
        <ecNumber evidence="1">1.6.5.-</ecNumber>
    </recommendedName>
    <alternativeName>
        <fullName evidence="1">Azo-dye reductase 2</fullName>
    </alternativeName>
    <alternativeName>
        <fullName evidence="1">FMN-dependent NADH-azo compound oxidoreductase 2</fullName>
    </alternativeName>
    <alternativeName>
        <fullName evidence="1">FMN-dependent NADH-azoreductase 2</fullName>
        <ecNumber evidence="1">1.7.1.17</ecNumber>
    </alternativeName>
</protein>
<reference key="1">
    <citation type="journal article" date="2000" name="Nucleic Acids Res.">
        <title>Complete genome sequence of the alkaliphilic bacterium Bacillus halodurans and genomic sequence comparison with Bacillus subtilis.</title>
        <authorList>
            <person name="Takami H."/>
            <person name="Nakasone K."/>
            <person name="Takaki Y."/>
            <person name="Maeno G."/>
            <person name="Sasaki R."/>
            <person name="Masui N."/>
            <person name="Fuji F."/>
            <person name="Hirama C."/>
            <person name="Nakamura Y."/>
            <person name="Ogasawara N."/>
            <person name="Kuhara S."/>
            <person name="Horikoshi K."/>
        </authorList>
    </citation>
    <scope>NUCLEOTIDE SEQUENCE [LARGE SCALE GENOMIC DNA]</scope>
    <source>
        <strain>ATCC BAA-125 / DSM 18197 / FERM 7344 / JCM 9153 / C-125</strain>
    </source>
</reference>
<evidence type="ECO:0000255" key="1">
    <source>
        <dbReference type="HAMAP-Rule" id="MF_01216"/>
    </source>
</evidence>
<keyword id="KW-0285">Flavoprotein</keyword>
<keyword id="KW-0288">FMN</keyword>
<keyword id="KW-0520">NAD</keyword>
<keyword id="KW-0560">Oxidoreductase</keyword>
<keyword id="KW-1185">Reference proteome</keyword>
<gene>
    <name evidence="1" type="primary">azoR2</name>
    <name type="ordered locus">BH3860</name>
</gene>
<sequence>MSKVLFVKGNPRSVDESVSVKMYQTFVDTYKEANPNDEVIELDIYNEQLPYLDSTMLAGIFKAGQQLELTAEEEEARKVADRYLTQFVEADKVVFAFPLWNFTIPAALHTYMDYLARAGVTFNYTAEGPVGLMGDKKVALLNARGGYYSEGPAAQLEMSLNYMKTMVGFFGVQDPVTVVIEGHNAVPDQAEEIINKGLEEVKKVAQSF</sequence>
<accession>Q9K672</accession>
<name>AZOR2_HALH5</name>
<comment type="function">
    <text evidence="1">Quinone reductase that provides resistance to thiol-specific stress caused by electrophilic quinones.</text>
</comment>
<comment type="function">
    <text evidence="1">Also exhibits azoreductase activity. Catalyzes the reductive cleavage of the azo bond in aromatic azo compounds to the corresponding amines.</text>
</comment>
<comment type="catalytic activity">
    <reaction evidence="1">
        <text>2 a quinone + NADH + H(+) = 2 a 1,4-benzosemiquinone + NAD(+)</text>
        <dbReference type="Rhea" id="RHEA:65952"/>
        <dbReference type="ChEBI" id="CHEBI:15378"/>
        <dbReference type="ChEBI" id="CHEBI:57540"/>
        <dbReference type="ChEBI" id="CHEBI:57945"/>
        <dbReference type="ChEBI" id="CHEBI:132124"/>
        <dbReference type="ChEBI" id="CHEBI:134225"/>
    </reaction>
</comment>
<comment type="catalytic activity">
    <reaction evidence="1">
        <text>N,N-dimethyl-1,4-phenylenediamine + anthranilate + 2 NAD(+) = 2-(4-dimethylaminophenyl)diazenylbenzoate + 2 NADH + 2 H(+)</text>
        <dbReference type="Rhea" id="RHEA:55872"/>
        <dbReference type="ChEBI" id="CHEBI:15378"/>
        <dbReference type="ChEBI" id="CHEBI:15783"/>
        <dbReference type="ChEBI" id="CHEBI:16567"/>
        <dbReference type="ChEBI" id="CHEBI:57540"/>
        <dbReference type="ChEBI" id="CHEBI:57945"/>
        <dbReference type="ChEBI" id="CHEBI:71579"/>
        <dbReference type="EC" id="1.7.1.17"/>
    </reaction>
</comment>
<comment type="cofactor">
    <cofactor evidence="1">
        <name>FMN</name>
        <dbReference type="ChEBI" id="CHEBI:58210"/>
    </cofactor>
    <text evidence="1">Binds 1 FMN per subunit.</text>
</comment>
<comment type="subunit">
    <text evidence="1">Homodimer.</text>
</comment>
<comment type="similarity">
    <text evidence="1">Belongs to the azoreductase type 1 family.</text>
</comment>
<organism>
    <name type="scientific">Halalkalibacterium halodurans (strain ATCC BAA-125 / DSM 18197 / FERM 7344 / JCM 9153 / C-125)</name>
    <name type="common">Bacillus halodurans</name>
    <dbReference type="NCBI Taxonomy" id="272558"/>
    <lineage>
        <taxon>Bacteria</taxon>
        <taxon>Bacillati</taxon>
        <taxon>Bacillota</taxon>
        <taxon>Bacilli</taxon>
        <taxon>Bacillales</taxon>
        <taxon>Bacillaceae</taxon>
        <taxon>Halalkalibacterium (ex Joshi et al. 2022)</taxon>
    </lineage>
</organism>
<feature type="chain" id="PRO_0000166325" description="FMN-dependent NADH:quinone oxidoreductase 2">
    <location>
        <begin position="1"/>
        <end position="208"/>
    </location>
</feature>
<feature type="binding site" evidence="1">
    <location>
        <begin position="17"/>
        <end position="19"/>
    </location>
    <ligand>
        <name>FMN</name>
        <dbReference type="ChEBI" id="CHEBI:58210"/>
    </ligand>
</feature>
<proteinExistence type="inferred from homology"/>